<comment type="function">
    <text evidence="1">Catalyzes the decarboxylation of S-adenosylmethionine to S-adenosylmethioninamine (dcAdoMet), the propylamine donor required for the synthesis of the polyamines spermine and spermidine from the diamine putrescine.</text>
</comment>
<comment type="catalytic activity">
    <reaction evidence="1">
        <text>S-adenosyl-L-methionine + H(+) = S-adenosyl 3-(methylsulfanyl)propylamine + CO2</text>
        <dbReference type="Rhea" id="RHEA:15981"/>
        <dbReference type="ChEBI" id="CHEBI:15378"/>
        <dbReference type="ChEBI" id="CHEBI:16526"/>
        <dbReference type="ChEBI" id="CHEBI:57443"/>
        <dbReference type="ChEBI" id="CHEBI:59789"/>
        <dbReference type="EC" id="4.1.1.50"/>
    </reaction>
</comment>
<comment type="cofactor">
    <cofactor evidence="1">
        <name>pyruvate</name>
        <dbReference type="ChEBI" id="CHEBI:15361"/>
    </cofactor>
    <text evidence="1">Binds 1 pyruvoyl group covalently per subunit.</text>
</comment>
<comment type="pathway">
    <text evidence="1">Amine and polyamine biosynthesis; S-adenosylmethioninamine biosynthesis; S-adenosylmethioninamine from S-adenosyl-L-methionine: step 1/1.</text>
</comment>
<comment type="subunit">
    <text evidence="1">Heterooctamer of four alpha and four beta chains arranged as a tetramer of alpha/beta heterodimers.</text>
</comment>
<comment type="PTM">
    <text evidence="1">Is synthesized initially as an inactive proenzyme. Formation of the active enzyme involves a self-maturation process in which the active site pyruvoyl group is generated from an internal serine residue via an autocatalytic post-translational modification. Two non-identical subunits are generated from the proenzyme in this reaction, and the pyruvate is formed at the N-terminus of the alpha chain, which is derived from the carboxyl end of the proenzyme. The post-translation cleavage follows an unusual pathway, termed non-hydrolytic serinolysis, in which the side chain hydroxyl group of the serine supplies its oxygen atom to form the C-terminus of the beta chain, while the remainder of the serine residue undergoes an oxidative deamination to produce ammonia and the pyruvoyl group blocking the N-terminus of the alpha chain.</text>
</comment>
<comment type="similarity">
    <text evidence="1">Belongs to the prokaryotic AdoMetDC family. Type 2 subfamily.</text>
</comment>
<organism>
    <name type="scientific">Buchnera aphidicola subsp. Acyrthosiphon pisum (strain 5A)</name>
    <dbReference type="NCBI Taxonomy" id="563178"/>
    <lineage>
        <taxon>Bacteria</taxon>
        <taxon>Pseudomonadati</taxon>
        <taxon>Pseudomonadota</taxon>
        <taxon>Gammaproteobacteria</taxon>
        <taxon>Enterobacterales</taxon>
        <taxon>Erwiniaceae</taxon>
        <taxon>Buchnera</taxon>
    </lineage>
</organism>
<feature type="chain" id="PRO_1000193160" description="S-adenosylmethionine decarboxylase beta chain" evidence="1">
    <location>
        <begin position="1"/>
        <end position="113"/>
    </location>
</feature>
<feature type="chain" id="PRO_1000193161" description="S-adenosylmethionine decarboxylase alpha chain" evidence="1">
    <location>
        <begin position="114"/>
        <end position="265"/>
    </location>
</feature>
<feature type="active site" description="Schiff-base intermediate with substrate; via pyruvic acid" evidence="1">
    <location>
        <position position="114"/>
    </location>
</feature>
<feature type="active site" description="Proton acceptor; for processing activity" evidence="1">
    <location>
        <position position="119"/>
    </location>
</feature>
<feature type="active site" description="Proton donor; for catalytic activity" evidence="1">
    <location>
        <position position="142"/>
    </location>
</feature>
<feature type="site" description="Cleavage (non-hydrolytic); by autolysis" evidence="1">
    <location>
        <begin position="113"/>
        <end position="114"/>
    </location>
</feature>
<feature type="modified residue" description="Pyruvic acid (Ser); by autocatalysis" evidence="1">
    <location>
        <position position="114"/>
    </location>
</feature>
<dbReference type="EC" id="4.1.1.50" evidence="1"/>
<dbReference type="EMBL" id="CP001161">
    <property type="protein sequence ID" value="ACL30578.1"/>
    <property type="molecule type" value="Genomic_DNA"/>
</dbReference>
<dbReference type="KEGG" id="bap:BUAP5A_205"/>
<dbReference type="HOGENOM" id="CLU_092007_0_0_6"/>
<dbReference type="OrthoDB" id="5290709at2"/>
<dbReference type="UniPathway" id="UPA00331">
    <property type="reaction ID" value="UER00451"/>
</dbReference>
<dbReference type="Proteomes" id="UP000006904">
    <property type="component" value="Chromosome"/>
</dbReference>
<dbReference type="GO" id="GO:0005829">
    <property type="term" value="C:cytosol"/>
    <property type="evidence" value="ECO:0007669"/>
    <property type="project" value="TreeGrafter"/>
</dbReference>
<dbReference type="GO" id="GO:0004014">
    <property type="term" value="F:adenosylmethionine decarboxylase activity"/>
    <property type="evidence" value="ECO:0007669"/>
    <property type="project" value="UniProtKB-UniRule"/>
</dbReference>
<dbReference type="GO" id="GO:0008295">
    <property type="term" value="P:spermidine biosynthetic process"/>
    <property type="evidence" value="ECO:0007669"/>
    <property type="project" value="UniProtKB-UniRule"/>
</dbReference>
<dbReference type="Gene3D" id="3.60.90.10">
    <property type="entry name" value="S-adenosylmethionine decarboxylase"/>
    <property type="match status" value="1"/>
</dbReference>
<dbReference type="HAMAP" id="MF_00465">
    <property type="entry name" value="AdoMetDC_2"/>
    <property type="match status" value="1"/>
</dbReference>
<dbReference type="InterPro" id="IPR003826">
    <property type="entry name" value="AdoMetDC_fam_prok"/>
</dbReference>
<dbReference type="InterPro" id="IPR009165">
    <property type="entry name" value="S-AdoMet_deCO2ase_bac"/>
</dbReference>
<dbReference type="InterPro" id="IPR016067">
    <property type="entry name" value="S-AdoMet_deCO2ase_core"/>
</dbReference>
<dbReference type="NCBIfam" id="TIGR03331">
    <property type="entry name" value="SAM_DCase_Eco"/>
    <property type="match status" value="1"/>
</dbReference>
<dbReference type="PANTHER" id="PTHR33866">
    <property type="entry name" value="S-ADENOSYLMETHIONINE DECARBOXYLASE PROENZYME"/>
    <property type="match status" value="1"/>
</dbReference>
<dbReference type="PANTHER" id="PTHR33866:SF1">
    <property type="entry name" value="S-ADENOSYLMETHIONINE DECARBOXYLASE PROENZYME"/>
    <property type="match status" value="1"/>
</dbReference>
<dbReference type="Pfam" id="PF02675">
    <property type="entry name" value="AdoMet_dc"/>
    <property type="match status" value="1"/>
</dbReference>
<dbReference type="PIRSF" id="PIRSF001356">
    <property type="entry name" value="SAM_decarboxylas"/>
    <property type="match status" value="1"/>
</dbReference>
<dbReference type="SUPFAM" id="SSF56276">
    <property type="entry name" value="S-adenosylmethionine decarboxylase"/>
    <property type="match status" value="1"/>
</dbReference>
<protein>
    <recommendedName>
        <fullName evidence="1">S-adenosylmethionine decarboxylase proenzyme</fullName>
        <shortName evidence="1">AdoMetDC</shortName>
        <shortName evidence="1">SAMDC</shortName>
        <ecNumber evidence="1">4.1.1.50</ecNumber>
    </recommendedName>
    <component>
        <recommendedName>
            <fullName evidence="1">S-adenosylmethionine decarboxylase beta chain</fullName>
        </recommendedName>
    </component>
    <component>
        <recommendedName>
            <fullName evidence="1">S-adenosylmethionine decarboxylase alpha chain</fullName>
        </recommendedName>
    </component>
</protein>
<proteinExistence type="inferred from homology"/>
<keyword id="KW-0068">Autocatalytic cleavage</keyword>
<keyword id="KW-0210">Decarboxylase</keyword>
<keyword id="KW-0456">Lyase</keyword>
<keyword id="KW-0620">Polyamine biosynthesis</keyword>
<keyword id="KW-0670">Pyruvate</keyword>
<keyword id="KW-0949">S-adenosyl-L-methionine</keyword>
<keyword id="KW-0704">Schiff base</keyword>
<keyword id="KW-0745">Spermidine biosynthesis</keyword>
<keyword id="KW-0865">Zymogen</keyword>
<sequence length="265" mass="30922">MIKLQKLKLYGFNNLTKSLSFCIYDICYANTNDSRNSYISYIDEQYNAIRLTKILKKTCSIIGANVLNIFHQDYEPQGASVTILVCEEPMSMEKIDALNKNIVSSSVLAHLDKSHICVHTYPESHPQSGICTFRADIEVSTCGIISPLNALNYLIHQLESDIVTIEYRVRGFTRDIHGIKHFIDHKINSIQNFMSDDIKSMYDMVDVNVYQENIFHTRMLLREFNLKNYLFNINLENLEKEERSYIMKLLSKEMREIYYGRNISR</sequence>
<name>SPED_BUCA5</name>
<evidence type="ECO:0000255" key="1">
    <source>
        <dbReference type="HAMAP-Rule" id="MF_00465"/>
    </source>
</evidence>
<reference key="1">
    <citation type="journal article" date="2009" name="Science">
        <title>The dynamics and time scale of ongoing genomic erosion in symbiotic bacteria.</title>
        <authorList>
            <person name="Moran N.A."/>
            <person name="McLaughlin H.J."/>
            <person name="Sorek R."/>
        </authorList>
    </citation>
    <scope>NUCLEOTIDE SEQUENCE [LARGE SCALE GENOMIC DNA]</scope>
    <source>
        <strain>5A</strain>
    </source>
</reference>
<accession>B8D907</accession>
<gene>
    <name evidence="1" type="primary">speD</name>
    <name type="ordered locus">BUAP5A_205</name>
</gene>